<name>NUDI_ECOLC</name>
<evidence type="ECO:0000255" key="1">
    <source>
        <dbReference type="HAMAP-Rule" id="MF_01846"/>
    </source>
</evidence>
<organism>
    <name type="scientific">Escherichia coli (strain ATCC 8739 / DSM 1576 / NBRC 3972 / NCIMB 8545 / WDCM 00012 / Crooks)</name>
    <dbReference type="NCBI Taxonomy" id="481805"/>
    <lineage>
        <taxon>Bacteria</taxon>
        <taxon>Pseudomonadati</taxon>
        <taxon>Pseudomonadota</taxon>
        <taxon>Gammaproteobacteria</taxon>
        <taxon>Enterobacterales</taxon>
        <taxon>Enterobacteriaceae</taxon>
        <taxon>Escherichia</taxon>
    </lineage>
</organism>
<keyword id="KW-0378">Hydrolase</keyword>
<keyword id="KW-0460">Magnesium</keyword>
<proteinExistence type="inferred from homology"/>
<comment type="function">
    <text evidence="1">Catalyzes the hydrolysis of nucleoside triphosphates, with a preference for pyrimidine deoxynucleoside triphosphates (dUTP, dTTP and dCTP).</text>
</comment>
<comment type="catalytic activity">
    <reaction evidence="1">
        <text>a ribonucleoside 5'-triphosphate + H2O = a ribonucleoside 5'-phosphate + diphosphate + H(+)</text>
        <dbReference type="Rhea" id="RHEA:23996"/>
        <dbReference type="ChEBI" id="CHEBI:15377"/>
        <dbReference type="ChEBI" id="CHEBI:15378"/>
        <dbReference type="ChEBI" id="CHEBI:33019"/>
        <dbReference type="ChEBI" id="CHEBI:58043"/>
        <dbReference type="ChEBI" id="CHEBI:61557"/>
        <dbReference type="EC" id="3.6.1.9"/>
    </reaction>
</comment>
<comment type="catalytic activity">
    <reaction evidence="1">
        <text>a 2'-deoxyribonucleoside 5'-triphosphate + H2O = a 2'-deoxyribonucleoside 5'-phosphate + diphosphate + H(+)</text>
        <dbReference type="Rhea" id="RHEA:44644"/>
        <dbReference type="ChEBI" id="CHEBI:15377"/>
        <dbReference type="ChEBI" id="CHEBI:15378"/>
        <dbReference type="ChEBI" id="CHEBI:33019"/>
        <dbReference type="ChEBI" id="CHEBI:61560"/>
        <dbReference type="ChEBI" id="CHEBI:65317"/>
        <dbReference type="EC" id="3.6.1.9"/>
    </reaction>
</comment>
<comment type="catalytic activity">
    <reaction evidence="1">
        <text>dUTP + H2O = dUMP + diphosphate + H(+)</text>
        <dbReference type="Rhea" id="RHEA:10248"/>
        <dbReference type="ChEBI" id="CHEBI:15377"/>
        <dbReference type="ChEBI" id="CHEBI:15378"/>
        <dbReference type="ChEBI" id="CHEBI:33019"/>
        <dbReference type="ChEBI" id="CHEBI:61555"/>
        <dbReference type="ChEBI" id="CHEBI:246422"/>
        <dbReference type="EC" id="3.6.1.9"/>
    </reaction>
</comment>
<comment type="catalytic activity">
    <reaction evidence="1">
        <text>dUTP + H2O = dUMP + diphosphate + H(+)</text>
        <dbReference type="Rhea" id="RHEA:10248"/>
        <dbReference type="ChEBI" id="CHEBI:15377"/>
        <dbReference type="ChEBI" id="CHEBI:15378"/>
        <dbReference type="ChEBI" id="CHEBI:33019"/>
        <dbReference type="ChEBI" id="CHEBI:61555"/>
        <dbReference type="ChEBI" id="CHEBI:246422"/>
        <dbReference type="EC" id="3.6.1.23"/>
    </reaction>
</comment>
<comment type="catalytic activity">
    <reaction evidence="1">
        <text>dTTP + H2O = dTMP + diphosphate + H(+)</text>
        <dbReference type="Rhea" id="RHEA:28534"/>
        <dbReference type="ChEBI" id="CHEBI:15377"/>
        <dbReference type="ChEBI" id="CHEBI:15378"/>
        <dbReference type="ChEBI" id="CHEBI:33019"/>
        <dbReference type="ChEBI" id="CHEBI:37568"/>
        <dbReference type="ChEBI" id="CHEBI:63528"/>
        <dbReference type="EC" id="3.6.1.9"/>
    </reaction>
</comment>
<comment type="catalytic activity">
    <reaction evidence="1">
        <text>dCTP + H2O = dCMP + diphosphate + H(+)</text>
        <dbReference type="Rhea" id="RHEA:22636"/>
        <dbReference type="ChEBI" id="CHEBI:15377"/>
        <dbReference type="ChEBI" id="CHEBI:15378"/>
        <dbReference type="ChEBI" id="CHEBI:33019"/>
        <dbReference type="ChEBI" id="CHEBI:57566"/>
        <dbReference type="ChEBI" id="CHEBI:61481"/>
        <dbReference type="EC" id="3.6.1.9"/>
    </reaction>
</comment>
<comment type="catalytic activity">
    <reaction evidence="1">
        <text>dCTP + H2O = dCMP + diphosphate + H(+)</text>
        <dbReference type="Rhea" id="RHEA:22636"/>
        <dbReference type="ChEBI" id="CHEBI:15377"/>
        <dbReference type="ChEBI" id="CHEBI:15378"/>
        <dbReference type="ChEBI" id="CHEBI:33019"/>
        <dbReference type="ChEBI" id="CHEBI:57566"/>
        <dbReference type="ChEBI" id="CHEBI:61481"/>
        <dbReference type="EC" id="3.6.1.12"/>
    </reaction>
</comment>
<comment type="cofactor">
    <cofactor evidence="1">
        <name>Mg(2+)</name>
        <dbReference type="ChEBI" id="CHEBI:18420"/>
    </cofactor>
</comment>
<comment type="subunit">
    <text evidence="1">Monomer.</text>
</comment>
<comment type="similarity">
    <text evidence="1">Belongs to the Nudix hydrolase family. NudI subfamily.</text>
</comment>
<dbReference type="EC" id="3.6.1.9" evidence="1"/>
<dbReference type="EC" id="3.6.1.12" evidence="1"/>
<dbReference type="EC" id="3.6.1.-" evidence="1"/>
<dbReference type="EC" id="3.6.1.23" evidence="1"/>
<dbReference type="EMBL" id="CP000946">
    <property type="protein sequence ID" value="ACA77062.1"/>
    <property type="molecule type" value="Genomic_DNA"/>
</dbReference>
<dbReference type="RefSeq" id="WP_001300564.1">
    <property type="nucleotide sequence ID" value="NZ_MTFT01000028.1"/>
</dbReference>
<dbReference type="SMR" id="B1IXT6"/>
<dbReference type="KEGG" id="ecl:EcolC_1398"/>
<dbReference type="HOGENOM" id="CLU_037162_31_0_6"/>
<dbReference type="GO" id="GO:0047840">
    <property type="term" value="F:dCTP diphosphatase activity"/>
    <property type="evidence" value="ECO:0007669"/>
    <property type="project" value="UniProtKB-EC"/>
</dbReference>
<dbReference type="GO" id="GO:0036218">
    <property type="term" value="F:dTTP diphosphatase activity"/>
    <property type="evidence" value="ECO:0007669"/>
    <property type="project" value="RHEA"/>
</dbReference>
<dbReference type="GO" id="GO:0004170">
    <property type="term" value="F:dUTP diphosphatase activity"/>
    <property type="evidence" value="ECO:0007669"/>
    <property type="project" value="UniProtKB-EC"/>
</dbReference>
<dbReference type="GO" id="GO:0000287">
    <property type="term" value="F:magnesium ion binding"/>
    <property type="evidence" value="ECO:0007669"/>
    <property type="project" value="UniProtKB-UniRule"/>
</dbReference>
<dbReference type="FunFam" id="3.90.79.10:FF:000039">
    <property type="entry name" value="Nucleoside triphosphatase NudI"/>
    <property type="match status" value="1"/>
</dbReference>
<dbReference type="Gene3D" id="3.90.79.10">
    <property type="entry name" value="Nucleoside Triphosphate Pyrophosphohydrolase"/>
    <property type="match status" value="1"/>
</dbReference>
<dbReference type="HAMAP" id="MF_01846">
    <property type="entry name" value="Nudix_NudI"/>
    <property type="match status" value="1"/>
</dbReference>
<dbReference type="InterPro" id="IPR023781">
    <property type="entry name" value="Nucleoside_triphosphatase_NudI"/>
</dbReference>
<dbReference type="InterPro" id="IPR020476">
    <property type="entry name" value="Nudix_hydrolase"/>
</dbReference>
<dbReference type="InterPro" id="IPR015797">
    <property type="entry name" value="NUDIX_hydrolase-like_dom_sf"/>
</dbReference>
<dbReference type="InterPro" id="IPR020084">
    <property type="entry name" value="NUDIX_hydrolase_CS"/>
</dbReference>
<dbReference type="InterPro" id="IPR000086">
    <property type="entry name" value="NUDIX_hydrolase_dom"/>
</dbReference>
<dbReference type="NCBIfam" id="NF012016">
    <property type="entry name" value="PRK15472.1"/>
    <property type="match status" value="1"/>
</dbReference>
<dbReference type="PANTHER" id="PTHR43046">
    <property type="entry name" value="GDP-MANNOSE MANNOSYL HYDROLASE"/>
    <property type="match status" value="1"/>
</dbReference>
<dbReference type="PANTHER" id="PTHR43046:SF14">
    <property type="entry name" value="MUTT_NUDIX FAMILY PROTEIN"/>
    <property type="match status" value="1"/>
</dbReference>
<dbReference type="Pfam" id="PF00293">
    <property type="entry name" value="NUDIX"/>
    <property type="match status" value="1"/>
</dbReference>
<dbReference type="PRINTS" id="PR00502">
    <property type="entry name" value="NUDIXFAMILY"/>
</dbReference>
<dbReference type="SUPFAM" id="SSF55811">
    <property type="entry name" value="Nudix"/>
    <property type="match status" value="1"/>
</dbReference>
<dbReference type="PROSITE" id="PS51462">
    <property type="entry name" value="NUDIX"/>
    <property type="match status" value="1"/>
</dbReference>
<dbReference type="PROSITE" id="PS00893">
    <property type="entry name" value="NUDIX_BOX"/>
    <property type="match status" value="1"/>
</dbReference>
<reference key="1">
    <citation type="submission" date="2008-02" db="EMBL/GenBank/DDBJ databases">
        <title>Complete sequence of Escherichia coli C str. ATCC 8739.</title>
        <authorList>
            <person name="Copeland A."/>
            <person name="Lucas S."/>
            <person name="Lapidus A."/>
            <person name="Glavina del Rio T."/>
            <person name="Dalin E."/>
            <person name="Tice H."/>
            <person name="Bruce D."/>
            <person name="Goodwin L."/>
            <person name="Pitluck S."/>
            <person name="Kiss H."/>
            <person name="Brettin T."/>
            <person name="Detter J.C."/>
            <person name="Han C."/>
            <person name="Kuske C.R."/>
            <person name="Schmutz J."/>
            <person name="Larimer F."/>
            <person name="Land M."/>
            <person name="Hauser L."/>
            <person name="Kyrpides N."/>
            <person name="Mikhailova N."/>
            <person name="Ingram L."/>
            <person name="Richardson P."/>
        </authorList>
    </citation>
    <scope>NUCLEOTIDE SEQUENCE [LARGE SCALE GENOMIC DNA]</scope>
    <source>
        <strain>ATCC 8739 / DSM 1576 / NBRC 3972 / NCIMB 8545 / WDCM 00012 / Crooks</strain>
    </source>
</reference>
<sequence>MRQRTIVCPLIQNDGAYLLCKMADDRGVFPGQWAISGGGVEPGERIEEALRREIREELGEQLLLTEITPWTFSDDIRTKTYADGRKEEIYMIYLIFDCVSANREVKINEEFQDYAWVKPEDLVHYDLNVATRKTLRLKGLL</sequence>
<feature type="chain" id="PRO_0000342124" description="Nucleoside triphosphatase NudI">
    <location>
        <begin position="1"/>
        <end position="141"/>
    </location>
</feature>
<feature type="domain" description="Nudix hydrolase" evidence="1">
    <location>
        <begin position="1"/>
        <end position="141"/>
    </location>
</feature>
<feature type="short sequence motif" description="Nudix box">
    <location>
        <begin position="38"/>
        <end position="59"/>
    </location>
</feature>
<gene>
    <name evidence="1" type="primary">nudI</name>
    <name type="ordered locus">EcolC_1398</name>
</gene>
<protein>
    <recommendedName>
        <fullName evidence="1">Nucleoside triphosphatase NudI</fullName>
        <ecNumber evidence="1">3.6.1.9</ecNumber>
    </recommendedName>
    <alternativeName>
        <fullName evidence="1">Nucleotide diphosphatase NudI</fullName>
    </alternativeName>
    <alternativeName>
        <fullName evidence="1">Pyrimidine deoxynucleoside triphosphate diphosphatase</fullName>
    </alternativeName>
    <alternativeName>
        <fullName evidence="1">dCTP diphosphatase</fullName>
        <ecNumber evidence="1">3.6.1.12</ecNumber>
    </alternativeName>
    <alternativeName>
        <fullName evidence="1">dTTP diphosphatase</fullName>
        <ecNumber evidence="1">3.6.1.-</ecNumber>
    </alternativeName>
    <alternativeName>
        <fullName evidence="1">dUTP diphosphatase</fullName>
        <ecNumber evidence="1">3.6.1.23</ecNumber>
    </alternativeName>
</protein>
<accession>B1IXT6</accession>